<feature type="chain" id="PRO_1000044403" description="Sec-independent protein translocase protein TatA">
    <location>
        <begin position="1"/>
        <end position="79"/>
    </location>
</feature>
<feature type="transmembrane region" description="Helical" evidence="1">
    <location>
        <begin position="1"/>
        <end position="21"/>
    </location>
</feature>
<feature type="region of interest" description="Disordered" evidence="2">
    <location>
        <begin position="43"/>
        <end position="79"/>
    </location>
</feature>
<feature type="compositionally biased region" description="Basic and acidic residues" evidence="2">
    <location>
        <begin position="43"/>
        <end position="52"/>
    </location>
</feature>
<sequence length="79" mass="8707">MGGLQPWHWVIVIAVFVLLFGAKKLPDAARSLGKSMRIFKSEIKEMQSEGKSDNPPATPITSERVDTNPTAEQPDKRSA</sequence>
<accession>A1UFV8</accession>
<name>TATA_MYCSK</name>
<reference key="1">
    <citation type="submission" date="2006-12" db="EMBL/GenBank/DDBJ databases">
        <title>Complete sequence of chromosome of Mycobacterium sp. KMS.</title>
        <authorList>
            <consortium name="US DOE Joint Genome Institute"/>
            <person name="Copeland A."/>
            <person name="Lucas S."/>
            <person name="Lapidus A."/>
            <person name="Barry K."/>
            <person name="Detter J.C."/>
            <person name="Glavina del Rio T."/>
            <person name="Hammon N."/>
            <person name="Israni S."/>
            <person name="Dalin E."/>
            <person name="Tice H."/>
            <person name="Pitluck S."/>
            <person name="Kiss H."/>
            <person name="Brettin T."/>
            <person name="Bruce D."/>
            <person name="Han C."/>
            <person name="Tapia R."/>
            <person name="Gilna P."/>
            <person name="Schmutz J."/>
            <person name="Larimer F."/>
            <person name="Land M."/>
            <person name="Hauser L."/>
            <person name="Kyrpides N."/>
            <person name="Mikhailova N."/>
            <person name="Miller C.D."/>
            <person name="Richardson P."/>
        </authorList>
    </citation>
    <scope>NUCLEOTIDE SEQUENCE [LARGE SCALE GENOMIC DNA]</scope>
    <source>
        <strain>KMS</strain>
    </source>
</reference>
<comment type="function">
    <text evidence="1">Part of the twin-arginine translocation (Tat) system that transports large folded proteins containing a characteristic twin-arginine motif in their signal peptide across membranes. TatA could form the protein-conducting channel of the Tat system.</text>
</comment>
<comment type="subunit">
    <text evidence="1">The Tat system comprises two distinct complexes: a TatABC complex, containing multiple copies of TatA, TatB and TatC subunits, and a separate TatA complex, containing only TatA subunits. Substrates initially bind to the TatABC complex, which probably triggers association of the separate TatA complex to form the active translocon.</text>
</comment>
<comment type="subcellular location">
    <subcellularLocation>
        <location evidence="1">Cell membrane</location>
        <topology evidence="1">Single-pass membrane protein</topology>
    </subcellularLocation>
</comment>
<comment type="similarity">
    <text evidence="1">Belongs to the TatA/E family.</text>
</comment>
<evidence type="ECO:0000255" key="1">
    <source>
        <dbReference type="HAMAP-Rule" id="MF_00236"/>
    </source>
</evidence>
<evidence type="ECO:0000256" key="2">
    <source>
        <dbReference type="SAM" id="MobiDB-lite"/>
    </source>
</evidence>
<organism>
    <name type="scientific">Mycobacterium sp. (strain KMS)</name>
    <dbReference type="NCBI Taxonomy" id="189918"/>
    <lineage>
        <taxon>Bacteria</taxon>
        <taxon>Bacillati</taxon>
        <taxon>Actinomycetota</taxon>
        <taxon>Actinomycetes</taxon>
        <taxon>Mycobacteriales</taxon>
        <taxon>Mycobacteriaceae</taxon>
        <taxon>Mycobacterium</taxon>
    </lineage>
</organism>
<proteinExistence type="inferred from homology"/>
<dbReference type="EMBL" id="CP000518">
    <property type="protein sequence ID" value="ABL91716.1"/>
    <property type="molecule type" value="Genomic_DNA"/>
</dbReference>
<dbReference type="SMR" id="A1UFV8"/>
<dbReference type="STRING" id="189918.Mkms_2519"/>
<dbReference type="KEGG" id="mkm:Mkms_2519"/>
<dbReference type="HOGENOM" id="CLU_086034_4_2_11"/>
<dbReference type="OrthoDB" id="5245163at2"/>
<dbReference type="GO" id="GO:0033281">
    <property type="term" value="C:TAT protein transport complex"/>
    <property type="evidence" value="ECO:0007669"/>
    <property type="project" value="UniProtKB-UniRule"/>
</dbReference>
<dbReference type="GO" id="GO:0008320">
    <property type="term" value="F:protein transmembrane transporter activity"/>
    <property type="evidence" value="ECO:0007669"/>
    <property type="project" value="UniProtKB-UniRule"/>
</dbReference>
<dbReference type="GO" id="GO:0043953">
    <property type="term" value="P:protein transport by the Tat complex"/>
    <property type="evidence" value="ECO:0007669"/>
    <property type="project" value="UniProtKB-UniRule"/>
</dbReference>
<dbReference type="Gene3D" id="1.20.5.3310">
    <property type="match status" value="1"/>
</dbReference>
<dbReference type="HAMAP" id="MF_00236">
    <property type="entry name" value="TatA_E"/>
    <property type="match status" value="1"/>
</dbReference>
<dbReference type="InterPro" id="IPR003369">
    <property type="entry name" value="TatA/B/E"/>
</dbReference>
<dbReference type="InterPro" id="IPR006312">
    <property type="entry name" value="TatA/E"/>
</dbReference>
<dbReference type="NCBIfam" id="NF001854">
    <property type="entry name" value="PRK00575.1"/>
    <property type="match status" value="1"/>
</dbReference>
<dbReference type="NCBIfam" id="TIGR01411">
    <property type="entry name" value="tatAE"/>
    <property type="match status" value="1"/>
</dbReference>
<dbReference type="PANTHER" id="PTHR42982">
    <property type="entry name" value="SEC-INDEPENDENT PROTEIN TRANSLOCASE PROTEIN TATA"/>
    <property type="match status" value="1"/>
</dbReference>
<dbReference type="PANTHER" id="PTHR42982:SF8">
    <property type="entry name" value="SEC-INDEPENDENT PROTEIN TRANSLOCASE PROTEIN TATA"/>
    <property type="match status" value="1"/>
</dbReference>
<dbReference type="Pfam" id="PF02416">
    <property type="entry name" value="TatA_B_E"/>
    <property type="match status" value="1"/>
</dbReference>
<gene>
    <name evidence="1" type="primary">tatA</name>
    <name type="ordered locus">Mkms_2519</name>
</gene>
<keyword id="KW-1003">Cell membrane</keyword>
<keyword id="KW-0472">Membrane</keyword>
<keyword id="KW-0653">Protein transport</keyword>
<keyword id="KW-0811">Translocation</keyword>
<keyword id="KW-0812">Transmembrane</keyword>
<keyword id="KW-1133">Transmembrane helix</keyword>
<keyword id="KW-0813">Transport</keyword>
<protein>
    <recommendedName>
        <fullName evidence="1">Sec-independent protein translocase protein TatA</fullName>
    </recommendedName>
</protein>